<protein>
    <recommendedName>
        <fullName evidence="1">Porphobilinogen deaminase</fullName>
        <shortName evidence="1">PBG</shortName>
        <ecNumber evidence="1">2.5.1.61</ecNumber>
    </recommendedName>
    <alternativeName>
        <fullName evidence="1">Hydroxymethylbilane synthase</fullName>
        <shortName evidence="1">HMBS</shortName>
    </alternativeName>
    <alternativeName>
        <fullName evidence="1">Pre-uroporphyrinogen synthase</fullName>
    </alternativeName>
</protein>
<comment type="function">
    <text evidence="1">Tetrapolymerization of the monopyrrole PBG into the hydroxymethylbilane pre-uroporphyrinogen in several discrete steps.</text>
</comment>
<comment type="catalytic activity">
    <reaction evidence="1">
        <text>4 porphobilinogen + H2O = hydroxymethylbilane + 4 NH4(+)</text>
        <dbReference type="Rhea" id="RHEA:13185"/>
        <dbReference type="ChEBI" id="CHEBI:15377"/>
        <dbReference type="ChEBI" id="CHEBI:28938"/>
        <dbReference type="ChEBI" id="CHEBI:57845"/>
        <dbReference type="ChEBI" id="CHEBI:58126"/>
        <dbReference type="EC" id="2.5.1.61"/>
    </reaction>
</comment>
<comment type="cofactor">
    <cofactor evidence="1">
        <name>dipyrromethane</name>
        <dbReference type="ChEBI" id="CHEBI:60342"/>
    </cofactor>
    <text evidence="1">Binds 1 dipyrromethane group covalently.</text>
</comment>
<comment type="pathway">
    <text evidence="1">Porphyrin-containing compound metabolism; protoporphyrin-IX biosynthesis; coproporphyrinogen-III from 5-aminolevulinate: step 2/4.</text>
</comment>
<comment type="subunit">
    <text evidence="1">Monomer.</text>
</comment>
<comment type="miscellaneous">
    <text evidence="1">The porphobilinogen subunits are added to the dipyrromethane group.</text>
</comment>
<comment type="similarity">
    <text evidence="1">Belongs to the HMBS family.</text>
</comment>
<reference key="1">
    <citation type="journal article" date="2009" name="Environ. Microbiol.">
        <title>Contribution of mobile genetic elements to Desulfovibrio vulgaris genome plasticity.</title>
        <authorList>
            <person name="Walker C.B."/>
            <person name="Stolyar S."/>
            <person name="Chivian D."/>
            <person name="Pinel N."/>
            <person name="Gabster J.A."/>
            <person name="Dehal P.S."/>
            <person name="He Z."/>
            <person name="Yang Z.K."/>
            <person name="Yen H.C."/>
            <person name="Zhou J."/>
            <person name="Wall J.D."/>
            <person name="Hazen T.C."/>
            <person name="Arkin A.P."/>
            <person name="Stahl D.A."/>
        </authorList>
    </citation>
    <scope>NUCLEOTIDE SEQUENCE [LARGE SCALE GENOMIC DNA]</scope>
    <source>
        <strain>DP4</strain>
    </source>
</reference>
<name>HEM3_NITV4</name>
<sequence length="315" mass="34057">MKHLVIATRGSKLALWQAEHIKSLIETEHAGKVDVSLKIIKTKGDIILDVPLAKVGGKGLFVKEIEEALLDGSADLAVHSMKDVPMELPEGLFLGCIPEREEPSDTLLSVRYASLDALPHGARVGTSSLRRQSQLLALRPDLDIISLRGNVDTRLRKLMDGEFDAIVMATAGLKRLGLSAPHHEVLAPPRFLPAVGQGALGIEFREDRADLRDMLAFLDHRPTRIRVEAERGFLAGLEGGCQVPIAGHAVMTGDDDFRIEGLVADLKGERVIRRTLEGTGANARNRGLELASQVLADGAAEILDEVYASGAADRQ</sequence>
<evidence type="ECO:0000255" key="1">
    <source>
        <dbReference type="HAMAP-Rule" id="MF_00260"/>
    </source>
</evidence>
<keyword id="KW-0627">Porphyrin biosynthesis</keyword>
<keyword id="KW-0808">Transferase</keyword>
<gene>
    <name evidence="1" type="primary">hemC</name>
    <name type="ordered locus">Dvul_1273</name>
</gene>
<accession>A1VCX6</accession>
<proteinExistence type="inferred from homology"/>
<feature type="chain" id="PRO_0000304235" description="Porphobilinogen deaminase">
    <location>
        <begin position="1"/>
        <end position="315"/>
    </location>
</feature>
<feature type="modified residue" description="S-(dipyrrolylmethanemethyl)cysteine" evidence="1">
    <location>
        <position position="241"/>
    </location>
</feature>
<dbReference type="EC" id="2.5.1.61" evidence="1"/>
<dbReference type="EMBL" id="CP000527">
    <property type="protein sequence ID" value="ABM28292.1"/>
    <property type="molecule type" value="Genomic_DNA"/>
</dbReference>
<dbReference type="RefSeq" id="WP_011792165.1">
    <property type="nucleotide sequence ID" value="NC_008751.1"/>
</dbReference>
<dbReference type="SMR" id="A1VCX6"/>
<dbReference type="KEGG" id="dvl:Dvul_1273"/>
<dbReference type="HOGENOM" id="CLU_019704_0_2_7"/>
<dbReference type="UniPathway" id="UPA00251">
    <property type="reaction ID" value="UER00319"/>
</dbReference>
<dbReference type="Proteomes" id="UP000009173">
    <property type="component" value="Chromosome"/>
</dbReference>
<dbReference type="GO" id="GO:0005737">
    <property type="term" value="C:cytoplasm"/>
    <property type="evidence" value="ECO:0007669"/>
    <property type="project" value="TreeGrafter"/>
</dbReference>
<dbReference type="GO" id="GO:0004418">
    <property type="term" value="F:hydroxymethylbilane synthase activity"/>
    <property type="evidence" value="ECO:0007669"/>
    <property type="project" value="UniProtKB-UniRule"/>
</dbReference>
<dbReference type="GO" id="GO:0006782">
    <property type="term" value="P:protoporphyrinogen IX biosynthetic process"/>
    <property type="evidence" value="ECO:0007669"/>
    <property type="project" value="UniProtKB-UniRule"/>
</dbReference>
<dbReference type="CDD" id="cd13646">
    <property type="entry name" value="PBP2_EcHMBS_like"/>
    <property type="match status" value="1"/>
</dbReference>
<dbReference type="FunFam" id="3.40.190.10:FF:000004">
    <property type="entry name" value="Porphobilinogen deaminase"/>
    <property type="match status" value="1"/>
</dbReference>
<dbReference type="FunFam" id="3.40.190.10:FF:000005">
    <property type="entry name" value="Porphobilinogen deaminase"/>
    <property type="match status" value="1"/>
</dbReference>
<dbReference type="Gene3D" id="3.40.190.10">
    <property type="entry name" value="Periplasmic binding protein-like II"/>
    <property type="match status" value="2"/>
</dbReference>
<dbReference type="Gene3D" id="3.30.160.40">
    <property type="entry name" value="Porphobilinogen deaminase, C-terminal domain"/>
    <property type="match status" value="1"/>
</dbReference>
<dbReference type="HAMAP" id="MF_00260">
    <property type="entry name" value="Porphobil_deam"/>
    <property type="match status" value="1"/>
</dbReference>
<dbReference type="InterPro" id="IPR000860">
    <property type="entry name" value="HemC"/>
</dbReference>
<dbReference type="InterPro" id="IPR022419">
    <property type="entry name" value="Porphobilin_deaminase_cofac_BS"/>
</dbReference>
<dbReference type="InterPro" id="IPR022417">
    <property type="entry name" value="Porphobilin_deaminase_N"/>
</dbReference>
<dbReference type="InterPro" id="IPR022418">
    <property type="entry name" value="Porphobilinogen_deaminase_C"/>
</dbReference>
<dbReference type="InterPro" id="IPR036803">
    <property type="entry name" value="Porphobilinogen_deaminase_C_sf"/>
</dbReference>
<dbReference type="NCBIfam" id="TIGR00212">
    <property type="entry name" value="hemC"/>
    <property type="match status" value="1"/>
</dbReference>
<dbReference type="PANTHER" id="PTHR11557">
    <property type="entry name" value="PORPHOBILINOGEN DEAMINASE"/>
    <property type="match status" value="1"/>
</dbReference>
<dbReference type="PANTHER" id="PTHR11557:SF0">
    <property type="entry name" value="PORPHOBILINOGEN DEAMINASE"/>
    <property type="match status" value="1"/>
</dbReference>
<dbReference type="Pfam" id="PF01379">
    <property type="entry name" value="Porphobil_deam"/>
    <property type="match status" value="1"/>
</dbReference>
<dbReference type="Pfam" id="PF03900">
    <property type="entry name" value="Porphobil_deamC"/>
    <property type="match status" value="1"/>
</dbReference>
<dbReference type="PIRSF" id="PIRSF001438">
    <property type="entry name" value="4pyrrol_synth_OHMeBilane_synth"/>
    <property type="match status" value="1"/>
</dbReference>
<dbReference type="PRINTS" id="PR00151">
    <property type="entry name" value="PORPHBDMNASE"/>
</dbReference>
<dbReference type="SUPFAM" id="SSF53850">
    <property type="entry name" value="Periplasmic binding protein-like II"/>
    <property type="match status" value="1"/>
</dbReference>
<dbReference type="SUPFAM" id="SSF54782">
    <property type="entry name" value="Porphobilinogen deaminase (hydroxymethylbilane synthase), C-terminal domain"/>
    <property type="match status" value="1"/>
</dbReference>
<dbReference type="PROSITE" id="PS00533">
    <property type="entry name" value="PORPHOBILINOGEN_DEAM"/>
    <property type="match status" value="1"/>
</dbReference>
<organism>
    <name type="scientific">Nitratidesulfovibrio vulgaris (strain DP4)</name>
    <name type="common">Desulfovibrio vulgaris</name>
    <dbReference type="NCBI Taxonomy" id="391774"/>
    <lineage>
        <taxon>Bacteria</taxon>
        <taxon>Pseudomonadati</taxon>
        <taxon>Thermodesulfobacteriota</taxon>
        <taxon>Desulfovibrionia</taxon>
        <taxon>Desulfovibrionales</taxon>
        <taxon>Desulfovibrionaceae</taxon>
        <taxon>Nitratidesulfovibrio</taxon>
    </lineage>
</organism>